<dbReference type="EC" id="6.3.4.19" evidence="1"/>
<dbReference type="EMBL" id="AE000520">
    <property type="protein sequence ID" value="AAC65358.1"/>
    <property type="molecule type" value="Genomic_DNA"/>
</dbReference>
<dbReference type="PIR" id="D71333">
    <property type="entry name" value="D71333"/>
</dbReference>
<dbReference type="RefSeq" id="WP_010881821.1">
    <property type="nucleotide sequence ID" value="NC_021490.2"/>
</dbReference>
<dbReference type="SMR" id="O83388"/>
<dbReference type="IntAct" id="O83388">
    <property type="interactions" value="2"/>
</dbReference>
<dbReference type="STRING" id="243276.TP_0373"/>
<dbReference type="EnsemblBacteria" id="AAC65358">
    <property type="protein sequence ID" value="AAC65358"/>
    <property type="gene ID" value="TP_0373"/>
</dbReference>
<dbReference type="GeneID" id="93876150"/>
<dbReference type="KEGG" id="tpa:TP_0373"/>
<dbReference type="KEGG" id="tpw:TPANIC_0373"/>
<dbReference type="eggNOG" id="COG0037">
    <property type="taxonomic scope" value="Bacteria"/>
</dbReference>
<dbReference type="HOGENOM" id="CLU_018869_0_1_12"/>
<dbReference type="OrthoDB" id="9807403at2"/>
<dbReference type="Proteomes" id="UP000000811">
    <property type="component" value="Chromosome"/>
</dbReference>
<dbReference type="GO" id="GO:0005737">
    <property type="term" value="C:cytoplasm"/>
    <property type="evidence" value="ECO:0007669"/>
    <property type="project" value="UniProtKB-SubCell"/>
</dbReference>
<dbReference type="GO" id="GO:0005524">
    <property type="term" value="F:ATP binding"/>
    <property type="evidence" value="ECO:0007669"/>
    <property type="project" value="UniProtKB-UniRule"/>
</dbReference>
<dbReference type="GO" id="GO:0032267">
    <property type="term" value="F:tRNA(Ile)-lysidine synthase activity"/>
    <property type="evidence" value="ECO:0007669"/>
    <property type="project" value="UniProtKB-EC"/>
</dbReference>
<dbReference type="GO" id="GO:0006400">
    <property type="term" value="P:tRNA modification"/>
    <property type="evidence" value="ECO:0007669"/>
    <property type="project" value="UniProtKB-UniRule"/>
</dbReference>
<dbReference type="CDD" id="cd01992">
    <property type="entry name" value="TilS_N"/>
    <property type="match status" value="1"/>
</dbReference>
<dbReference type="Gene3D" id="3.40.50.620">
    <property type="entry name" value="HUPs"/>
    <property type="match status" value="1"/>
</dbReference>
<dbReference type="HAMAP" id="MF_01161">
    <property type="entry name" value="tRNA_Ile_lys_synt"/>
    <property type="match status" value="1"/>
</dbReference>
<dbReference type="InterPro" id="IPR012796">
    <property type="entry name" value="Lysidine-tRNA-synth_C"/>
</dbReference>
<dbReference type="InterPro" id="IPR014729">
    <property type="entry name" value="Rossmann-like_a/b/a_fold"/>
</dbReference>
<dbReference type="InterPro" id="IPR011063">
    <property type="entry name" value="TilS/TtcA_N"/>
</dbReference>
<dbReference type="InterPro" id="IPR012094">
    <property type="entry name" value="tRNA_Ile_lys_synt"/>
</dbReference>
<dbReference type="InterPro" id="IPR012795">
    <property type="entry name" value="tRNA_Ile_lys_synt_N"/>
</dbReference>
<dbReference type="NCBIfam" id="TIGR02433">
    <property type="entry name" value="lysidine_TilS_C"/>
    <property type="match status" value="1"/>
</dbReference>
<dbReference type="NCBIfam" id="TIGR02432">
    <property type="entry name" value="lysidine_TilS_N"/>
    <property type="match status" value="1"/>
</dbReference>
<dbReference type="PANTHER" id="PTHR43033">
    <property type="entry name" value="TRNA(ILE)-LYSIDINE SYNTHASE-RELATED"/>
    <property type="match status" value="1"/>
</dbReference>
<dbReference type="PANTHER" id="PTHR43033:SF1">
    <property type="entry name" value="TRNA(ILE)-LYSIDINE SYNTHASE-RELATED"/>
    <property type="match status" value="1"/>
</dbReference>
<dbReference type="Pfam" id="PF01171">
    <property type="entry name" value="ATP_bind_3"/>
    <property type="match status" value="1"/>
</dbReference>
<dbReference type="SUPFAM" id="SSF52402">
    <property type="entry name" value="Adenine nucleotide alpha hydrolases-like"/>
    <property type="match status" value="1"/>
</dbReference>
<dbReference type="SUPFAM" id="SSF56037">
    <property type="entry name" value="PheT/TilS domain"/>
    <property type="match status" value="1"/>
</dbReference>
<keyword id="KW-0067">ATP-binding</keyword>
<keyword id="KW-0963">Cytoplasm</keyword>
<keyword id="KW-0436">Ligase</keyword>
<keyword id="KW-0547">Nucleotide-binding</keyword>
<keyword id="KW-1185">Reference proteome</keyword>
<keyword id="KW-0819">tRNA processing</keyword>
<comment type="function">
    <text evidence="1">Ligates lysine onto the cytidine present at position 34 of the AUA codon-specific tRNA(Ile) that contains the anticodon CAU, in an ATP-dependent manner. Cytidine is converted to lysidine, thus changing the amino acid specificity of the tRNA from methionine to isoleucine.</text>
</comment>
<comment type="catalytic activity">
    <reaction evidence="1">
        <text>cytidine(34) in tRNA(Ile2) + L-lysine + ATP = lysidine(34) in tRNA(Ile2) + AMP + diphosphate + H(+)</text>
        <dbReference type="Rhea" id="RHEA:43744"/>
        <dbReference type="Rhea" id="RHEA-COMP:10625"/>
        <dbReference type="Rhea" id="RHEA-COMP:10670"/>
        <dbReference type="ChEBI" id="CHEBI:15378"/>
        <dbReference type="ChEBI" id="CHEBI:30616"/>
        <dbReference type="ChEBI" id="CHEBI:32551"/>
        <dbReference type="ChEBI" id="CHEBI:33019"/>
        <dbReference type="ChEBI" id="CHEBI:82748"/>
        <dbReference type="ChEBI" id="CHEBI:83665"/>
        <dbReference type="ChEBI" id="CHEBI:456215"/>
        <dbReference type="EC" id="6.3.4.19"/>
    </reaction>
</comment>
<comment type="subcellular location">
    <subcellularLocation>
        <location evidence="1">Cytoplasm</location>
    </subcellularLocation>
</comment>
<comment type="domain">
    <text>The N-terminal region contains the highly conserved SGGXDS motif, predicted to be a P-loop motif involved in ATP binding.</text>
</comment>
<comment type="similarity">
    <text evidence="1">Belongs to the tRNA(Ile)-lysidine synthase family.</text>
</comment>
<proteinExistence type="inferred from homology"/>
<name>TILS_TREPA</name>
<reference key="1">
    <citation type="journal article" date="1998" name="Science">
        <title>Complete genome sequence of Treponema pallidum, the syphilis spirochete.</title>
        <authorList>
            <person name="Fraser C.M."/>
            <person name="Norris S.J."/>
            <person name="Weinstock G.M."/>
            <person name="White O."/>
            <person name="Sutton G.G."/>
            <person name="Dodson R.J."/>
            <person name="Gwinn M.L."/>
            <person name="Hickey E.K."/>
            <person name="Clayton R.A."/>
            <person name="Ketchum K.A."/>
            <person name="Sodergren E."/>
            <person name="Hardham J.M."/>
            <person name="McLeod M.P."/>
            <person name="Salzberg S.L."/>
            <person name="Peterson J.D."/>
            <person name="Khalak H.G."/>
            <person name="Richardson D.L."/>
            <person name="Howell J.K."/>
            <person name="Chidambaram M."/>
            <person name="Utterback T.R."/>
            <person name="McDonald L.A."/>
            <person name="Artiach P."/>
            <person name="Bowman C."/>
            <person name="Cotton M.D."/>
            <person name="Fujii C."/>
            <person name="Garland S.A."/>
            <person name="Hatch B."/>
            <person name="Horst K."/>
            <person name="Roberts K.M."/>
            <person name="Sandusky M."/>
            <person name="Weidman J.F."/>
            <person name="Smith H.O."/>
            <person name="Venter J.C."/>
        </authorList>
    </citation>
    <scope>NUCLEOTIDE SEQUENCE [LARGE SCALE GENOMIC DNA]</scope>
    <source>
        <strain>Nichols</strain>
    </source>
</reference>
<feature type="chain" id="PRO_0000181796" description="tRNA(Ile)-lysidine synthase">
    <location>
        <begin position="1"/>
        <end position="477"/>
    </location>
</feature>
<feature type="binding site" evidence="1">
    <location>
        <begin position="36"/>
        <end position="41"/>
    </location>
    <ligand>
        <name>ATP</name>
        <dbReference type="ChEBI" id="CHEBI:30616"/>
    </ligand>
</feature>
<protein>
    <recommendedName>
        <fullName evidence="1">tRNA(Ile)-lysidine synthase</fullName>
        <ecNumber evidence="1">6.3.4.19</ecNumber>
    </recommendedName>
    <alternativeName>
        <fullName evidence="1">tRNA(Ile)-2-lysyl-cytidine synthase</fullName>
    </alternativeName>
    <alternativeName>
        <fullName evidence="1">tRNA(Ile)-lysidine synthetase</fullName>
    </alternativeName>
</protein>
<accession>O83388</accession>
<organism>
    <name type="scientific">Treponema pallidum (strain Nichols)</name>
    <dbReference type="NCBI Taxonomy" id="243276"/>
    <lineage>
        <taxon>Bacteria</taxon>
        <taxon>Pseudomonadati</taxon>
        <taxon>Spirochaetota</taxon>
        <taxon>Spirochaetia</taxon>
        <taxon>Spirochaetales</taxon>
        <taxon>Treponemataceae</taxon>
        <taxon>Treponema</taxon>
    </lineage>
</organism>
<gene>
    <name evidence="1" type="primary">tilS</name>
    <name type="ordered locus">TP_0373</name>
</gene>
<sequence length="477" mass="52606">MSESRQKLHPLLVHVARSFGHFLVPRKPSCLLVAVSGGADSLALLYAAHELAPDFGVCACAVTVDHSLRAQEGALDARFVRALCARFSPPLPCFVQQISAGAVHACAKIRGRGVQDAARALRYKVFDHVAARCGAQVVLTAHTRDDQYETLLMRLFQGAAASALQGIRAARGRYVRPLLKVSRTCVEDFLQTRGVRWREDASNTCRKYVRNRIRHELIPALDAVLAGWRSGLDKTFAGISAEHSFCVAALTRWREGCSHAWEPVPRALGTRLRMPRSDFLAAEFILRFFLLQEACVRLGVSHRVPRGALERCARFDGVRRIHVSGLQLERAGAYVLFSCIHASDTARETKKQDAGSPPSSEKQGVSAIYVARPGAYPCACGTLLVEVRPAGVFVCCAQDHVGVGPFSFPFYIRTHRTGDTISIRGGHKGIRKMFSEWHVPLSDRTVLPMIEQDGVLRALYGAALGYQNRYAERTPHE</sequence>
<evidence type="ECO:0000255" key="1">
    <source>
        <dbReference type="HAMAP-Rule" id="MF_01161"/>
    </source>
</evidence>